<dbReference type="EMBL" id="CP000086">
    <property type="protein sequence ID" value="ABC38831.1"/>
    <property type="status" value="ALT_INIT"/>
    <property type="molecule type" value="Genomic_DNA"/>
</dbReference>
<dbReference type="RefSeq" id="WP_004197951.1">
    <property type="nucleotide sequence ID" value="NZ_CP008786.1"/>
</dbReference>
<dbReference type="SMR" id="Q2SU37"/>
<dbReference type="GeneID" id="93171007"/>
<dbReference type="KEGG" id="bte:BTH_I3058"/>
<dbReference type="HOGENOM" id="CLU_095071_1_1_4"/>
<dbReference type="Proteomes" id="UP000001930">
    <property type="component" value="Chromosome I"/>
</dbReference>
<dbReference type="GO" id="GO:0022625">
    <property type="term" value="C:cytosolic large ribosomal subunit"/>
    <property type="evidence" value="ECO:0007669"/>
    <property type="project" value="TreeGrafter"/>
</dbReference>
<dbReference type="GO" id="GO:0070180">
    <property type="term" value="F:large ribosomal subunit rRNA binding"/>
    <property type="evidence" value="ECO:0007669"/>
    <property type="project" value="TreeGrafter"/>
</dbReference>
<dbReference type="GO" id="GO:0003735">
    <property type="term" value="F:structural constituent of ribosome"/>
    <property type="evidence" value="ECO:0007669"/>
    <property type="project" value="InterPro"/>
</dbReference>
<dbReference type="GO" id="GO:0006412">
    <property type="term" value="P:translation"/>
    <property type="evidence" value="ECO:0007669"/>
    <property type="project" value="UniProtKB-UniRule"/>
</dbReference>
<dbReference type="CDD" id="cd00337">
    <property type="entry name" value="Ribosomal_uL14"/>
    <property type="match status" value="1"/>
</dbReference>
<dbReference type="FunFam" id="2.40.150.20:FF:000001">
    <property type="entry name" value="50S ribosomal protein L14"/>
    <property type="match status" value="1"/>
</dbReference>
<dbReference type="Gene3D" id="2.40.150.20">
    <property type="entry name" value="Ribosomal protein L14"/>
    <property type="match status" value="1"/>
</dbReference>
<dbReference type="HAMAP" id="MF_01367">
    <property type="entry name" value="Ribosomal_uL14"/>
    <property type="match status" value="1"/>
</dbReference>
<dbReference type="InterPro" id="IPR000218">
    <property type="entry name" value="Ribosomal_uL14"/>
</dbReference>
<dbReference type="InterPro" id="IPR005745">
    <property type="entry name" value="Ribosomal_uL14_bac-type"/>
</dbReference>
<dbReference type="InterPro" id="IPR019972">
    <property type="entry name" value="Ribosomal_uL14_CS"/>
</dbReference>
<dbReference type="InterPro" id="IPR036853">
    <property type="entry name" value="Ribosomal_uL14_sf"/>
</dbReference>
<dbReference type="NCBIfam" id="TIGR01067">
    <property type="entry name" value="rplN_bact"/>
    <property type="match status" value="1"/>
</dbReference>
<dbReference type="PANTHER" id="PTHR11761">
    <property type="entry name" value="50S/60S RIBOSOMAL PROTEIN L14/L23"/>
    <property type="match status" value="1"/>
</dbReference>
<dbReference type="PANTHER" id="PTHR11761:SF3">
    <property type="entry name" value="LARGE RIBOSOMAL SUBUNIT PROTEIN UL14M"/>
    <property type="match status" value="1"/>
</dbReference>
<dbReference type="Pfam" id="PF00238">
    <property type="entry name" value="Ribosomal_L14"/>
    <property type="match status" value="1"/>
</dbReference>
<dbReference type="SMART" id="SM01374">
    <property type="entry name" value="Ribosomal_L14"/>
    <property type="match status" value="1"/>
</dbReference>
<dbReference type="SUPFAM" id="SSF50193">
    <property type="entry name" value="Ribosomal protein L14"/>
    <property type="match status" value="1"/>
</dbReference>
<dbReference type="PROSITE" id="PS00049">
    <property type="entry name" value="RIBOSOMAL_L14"/>
    <property type="match status" value="1"/>
</dbReference>
<protein>
    <recommendedName>
        <fullName evidence="1">Large ribosomal subunit protein uL14</fullName>
    </recommendedName>
    <alternativeName>
        <fullName evidence="2">50S ribosomal protein L14</fullName>
    </alternativeName>
</protein>
<evidence type="ECO:0000255" key="1">
    <source>
        <dbReference type="HAMAP-Rule" id="MF_01367"/>
    </source>
</evidence>
<evidence type="ECO:0000305" key="2"/>
<keyword id="KW-0687">Ribonucleoprotein</keyword>
<keyword id="KW-0689">Ribosomal protein</keyword>
<keyword id="KW-0694">RNA-binding</keyword>
<keyword id="KW-0699">rRNA-binding</keyword>
<comment type="function">
    <text evidence="1">Binds to 23S rRNA. Forms part of two intersubunit bridges in the 70S ribosome.</text>
</comment>
<comment type="subunit">
    <text evidence="1">Part of the 50S ribosomal subunit. Forms a cluster with proteins L3 and L19. In the 70S ribosome, L14 and L19 interact and together make contacts with the 16S rRNA in bridges B5 and B8.</text>
</comment>
<comment type="similarity">
    <text evidence="1">Belongs to the universal ribosomal protein uL14 family.</text>
</comment>
<comment type="sequence caution" evidence="2">
    <conflict type="erroneous initiation">
        <sequence resource="EMBL-CDS" id="ABC38831"/>
    </conflict>
</comment>
<proteinExistence type="inferred from homology"/>
<sequence length="122" mass="13454">MIQTESRLEVADNTGAREVMCIKVLGGSKRRYASIGDIIKVSVKEATPRGRVKKGEIYNAVVVRTAKGVRRQDGSLIKFDGNAAVLLNNKLEPIGTRIFGPVTRELRSERFMKIVSLAPEVL</sequence>
<reference key="1">
    <citation type="journal article" date="2005" name="BMC Genomics">
        <title>Bacterial genome adaptation to niches: divergence of the potential virulence genes in three Burkholderia species of different survival strategies.</title>
        <authorList>
            <person name="Kim H.S."/>
            <person name="Schell M.A."/>
            <person name="Yu Y."/>
            <person name="Ulrich R.L."/>
            <person name="Sarria S.H."/>
            <person name="Nierman W.C."/>
            <person name="DeShazer D."/>
        </authorList>
    </citation>
    <scope>NUCLEOTIDE SEQUENCE [LARGE SCALE GENOMIC DNA]</scope>
    <source>
        <strain>ATCC 700388 / DSM 13276 / CCUG 48851 / CIP 106301 / E264</strain>
    </source>
</reference>
<organism>
    <name type="scientific">Burkholderia thailandensis (strain ATCC 700388 / DSM 13276 / CCUG 48851 / CIP 106301 / E264)</name>
    <dbReference type="NCBI Taxonomy" id="271848"/>
    <lineage>
        <taxon>Bacteria</taxon>
        <taxon>Pseudomonadati</taxon>
        <taxon>Pseudomonadota</taxon>
        <taxon>Betaproteobacteria</taxon>
        <taxon>Burkholderiales</taxon>
        <taxon>Burkholderiaceae</taxon>
        <taxon>Burkholderia</taxon>
        <taxon>pseudomallei group</taxon>
    </lineage>
</organism>
<name>RL14_BURTA</name>
<accession>Q2SU37</accession>
<feature type="chain" id="PRO_0000266465" description="Large ribosomal subunit protein uL14">
    <location>
        <begin position="1"/>
        <end position="122"/>
    </location>
</feature>
<gene>
    <name evidence="1" type="primary">rplN</name>
    <name type="ordered locus">BTH_I3058</name>
</gene>